<accession>Q6RYW5</accession>
<accession>D0CDF2</accession>
<organism>
    <name type="scientific">Acinetobacter baumannii (strain ATCC 19606 / DSM 30007 / JCM 6841 / CCUG 19606 / CIP 70.34 / NBRC 109757 / NCIMB 12457 / NCTC 12156 / 81)</name>
    <dbReference type="NCBI Taxonomy" id="575584"/>
    <lineage>
        <taxon>Bacteria</taxon>
        <taxon>Pseudomonadati</taxon>
        <taxon>Pseudomonadota</taxon>
        <taxon>Gammaproteobacteria</taxon>
        <taxon>Moraxellales</taxon>
        <taxon>Moraxellaceae</taxon>
        <taxon>Acinetobacter</taxon>
        <taxon>Acinetobacter calcoaceticus/baumannii complex</taxon>
    </lineage>
</organism>
<sequence>MKLSRIALATMLVAAPLAAANAGVTVTPLLLGYTFQDSQHNNGGKDGNLTNGPELQDDLFVGAALGIELTPWLGFEAEYNQVKGDVDGASAGAEYKQKQINGNFYVTSDLITKNYDSKIKPYVLLGAGHYKYDFDGVNRGTRGTSEEGTLGNAGVGAFWRLNDALSLRTEARATYNADEEFWNYTALAGLNVVLGGHLKPAAPVVEVAPVEPTPVAPQPQELTEDLNMELRVFFDTNKSNIKDQYKPEIAKVAEKLSEYPNATARIEGHTDNTGPRKLNERLSLARANSVKSALVNEYNVDASRLSTQGFAWDQPIADNKTKEGRAMNRRVFATITGSRTVVVQPGQEAAAPAAAQ</sequence>
<proteinExistence type="evidence at protein level"/>
<evidence type="ECO:0000255" key="1"/>
<evidence type="ECO:0000255" key="2">
    <source>
        <dbReference type="PROSITE-ProRule" id="PRU00473"/>
    </source>
</evidence>
<evidence type="ECO:0000269" key="3">
    <source>
    </source>
</evidence>
<evidence type="ECO:0000269" key="4">
    <source>
    </source>
</evidence>
<evidence type="ECO:0000269" key="5">
    <source>
    </source>
</evidence>
<evidence type="ECO:0000303" key="6">
    <source>
    </source>
</evidence>
<evidence type="ECO:0000303" key="7">
    <source>
    </source>
</evidence>
<evidence type="ECO:0000303" key="8">
    <source>
    </source>
</evidence>
<evidence type="ECO:0000305" key="9"/>
<evidence type="ECO:0000305" key="10">
    <source>
    </source>
</evidence>
<evidence type="ECO:0000305" key="11">
    <source>
    </source>
</evidence>
<evidence type="ECO:0007744" key="12">
    <source>
        <dbReference type="PDB" id="3TD3"/>
    </source>
</evidence>
<evidence type="ECO:0007744" key="13">
    <source>
        <dbReference type="PDB" id="3TD4"/>
    </source>
</evidence>
<evidence type="ECO:0007744" key="14">
    <source>
        <dbReference type="PDB" id="3TD5"/>
    </source>
</evidence>
<evidence type="ECO:0007744" key="15">
    <source>
        <dbReference type="PDB" id="4G4Y"/>
    </source>
</evidence>
<evidence type="ECO:0007744" key="16">
    <source>
        <dbReference type="PDB" id="4G4Z"/>
    </source>
</evidence>
<evidence type="ECO:0007744" key="17">
    <source>
        <dbReference type="PDB" id="4G88"/>
    </source>
</evidence>
<evidence type="ECO:0007829" key="18">
    <source>
        <dbReference type="PDB" id="3TD3"/>
    </source>
</evidence>
<keyword id="KW-0002">3D-structure</keyword>
<keyword id="KW-0053">Apoptosis</keyword>
<keyword id="KW-0998">Cell outer membrane</keyword>
<keyword id="KW-1045">Host mitochondrion</keyword>
<keyword id="KW-0406">Ion transport</keyword>
<keyword id="KW-0472">Membrane</keyword>
<keyword id="KW-0626">Porin</keyword>
<keyword id="KW-1185">Reference proteome</keyword>
<keyword id="KW-0732">Signal</keyword>
<keyword id="KW-0812">Transmembrane</keyword>
<keyword id="KW-1134">Transmembrane beta strand</keyword>
<keyword id="KW-0813">Transport</keyword>
<keyword id="KW-0843">Virulence</keyword>
<dbReference type="EMBL" id="AY485227">
    <property type="protein sequence ID" value="AAR83911.1"/>
    <property type="molecule type" value="Genomic_DNA"/>
</dbReference>
<dbReference type="EMBL" id="GG704577">
    <property type="protein sequence ID" value="EEX02591.1"/>
    <property type="molecule type" value="Genomic_DNA"/>
</dbReference>
<dbReference type="RefSeq" id="WP_000777878.1">
    <property type="nucleotide sequence ID" value="NZ_MJHA01000010.1"/>
</dbReference>
<dbReference type="PDB" id="3TD3">
    <property type="method" value="X-ray"/>
    <property type="resolution" value="1.59 A"/>
    <property type="chains" value="A/B/C/D/E/F/G/H=221-339"/>
</dbReference>
<dbReference type="PDB" id="3TD4">
    <property type="method" value="X-ray"/>
    <property type="resolution" value="1.79 A"/>
    <property type="chains" value="A/B/C/D/E/F/G/H=221-339"/>
</dbReference>
<dbReference type="PDB" id="3TD5">
    <property type="method" value="X-ray"/>
    <property type="resolution" value="2.00 A"/>
    <property type="chains" value="A/B/C/D/E/F/G/H=221-339"/>
</dbReference>
<dbReference type="PDB" id="4G4Y">
    <property type="method" value="X-ray"/>
    <property type="resolution" value="1.70 A"/>
    <property type="chains" value="A/B/C/D/E/F/G/H=221-339"/>
</dbReference>
<dbReference type="PDB" id="4G4Z">
    <property type="method" value="X-ray"/>
    <property type="resolution" value="1.80 A"/>
    <property type="chains" value="A/B/C/D/E/F/G/H=221-339"/>
</dbReference>
<dbReference type="PDB" id="4G88">
    <property type="method" value="X-ray"/>
    <property type="resolution" value="1.70 A"/>
    <property type="chains" value="A/B/C/D/E/F/G/H=221-339"/>
</dbReference>
<dbReference type="PDBsum" id="3TD3"/>
<dbReference type="PDBsum" id="3TD4"/>
<dbReference type="PDBsum" id="3TD5"/>
<dbReference type="PDBsum" id="4G4Y"/>
<dbReference type="PDBsum" id="4G4Z"/>
<dbReference type="PDBsum" id="4G88"/>
<dbReference type="SMR" id="Q6RYW5"/>
<dbReference type="TCDB" id="1.B.6.1.24">
    <property type="family name" value="the ompa-ompf porin (oop) family"/>
</dbReference>
<dbReference type="GeneID" id="92895120"/>
<dbReference type="PATRIC" id="fig|575584.18.peg.946"/>
<dbReference type="eggNOG" id="COG2885">
    <property type="taxonomic scope" value="Bacteria"/>
</dbReference>
<dbReference type="eggNOG" id="COG3637">
    <property type="taxonomic scope" value="Bacteria"/>
</dbReference>
<dbReference type="EvolutionaryTrace" id="Q6RYW5"/>
<dbReference type="PHI-base" id="PHI:11127"/>
<dbReference type="PHI-base" id="PHI:11364"/>
<dbReference type="PHI-base" id="PHI:11815"/>
<dbReference type="PHI-base" id="PHI:11889"/>
<dbReference type="PHI-base" id="PHI:9283"/>
<dbReference type="Proteomes" id="UP000005740">
    <property type="component" value="Unassembled WGS sequence"/>
</dbReference>
<dbReference type="GO" id="GO:0009279">
    <property type="term" value="C:cell outer membrane"/>
    <property type="evidence" value="ECO:0007669"/>
    <property type="project" value="UniProtKB-SubCell"/>
</dbReference>
<dbReference type="GO" id="GO:0033650">
    <property type="term" value="C:host cell mitochondrion"/>
    <property type="evidence" value="ECO:0007669"/>
    <property type="project" value="UniProtKB-SubCell"/>
</dbReference>
<dbReference type="GO" id="GO:0046930">
    <property type="term" value="C:pore complex"/>
    <property type="evidence" value="ECO:0007669"/>
    <property type="project" value="UniProtKB-KW"/>
</dbReference>
<dbReference type="GO" id="GO:0015288">
    <property type="term" value="F:porin activity"/>
    <property type="evidence" value="ECO:0007669"/>
    <property type="project" value="UniProtKB-KW"/>
</dbReference>
<dbReference type="GO" id="GO:0006811">
    <property type="term" value="P:monoatomic ion transport"/>
    <property type="evidence" value="ECO:0007669"/>
    <property type="project" value="UniProtKB-KW"/>
</dbReference>
<dbReference type="CDD" id="cd07185">
    <property type="entry name" value="OmpA_C-like"/>
    <property type="match status" value="1"/>
</dbReference>
<dbReference type="Gene3D" id="2.40.160.20">
    <property type="match status" value="1"/>
</dbReference>
<dbReference type="Gene3D" id="3.30.1330.60">
    <property type="entry name" value="OmpA-like domain"/>
    <property type="match status" value="1"/>
</dbReference>
<dbReference type="InterPro" id="IPR050330">
    <property type="entry name" value="Bact_OuterMem_StrucFunc"/>
</dbReference>
<dbReference type="InterPro" id="IPR011250">
    <property type="entry name" value="OMP/PagP_b-brl"/>
</dbReference>
<dbReference type="InterPro" id="IPR054882">
    <property type="entry name" value="Omp38"/>
</dbReference>
<dbReference type="InterPro" id="IPR027385">
    <property type="entry name" value="OMP_b-brl"/>
</dbReference>
<dbReference type="InterPro" id="IPR006664">
    <property type="entry name" value="OMP_bac"/>
</dbReference>
<dbReference type="InterPro" id="IPR006665">
    <property type="entry name" value="OmpA-like"/>
</dbReference>
<dbReference type="InterPro" id="IPR036737">
    <property type="entry name" value="OmpA-like_sf"/>
</dbReference>
<dbReference type="NCBIfam" id="NF045788">
    <property type="entry name" value="Omp38Acinit"/>
    <property type="match status" value="1"/>
</dbReference>
<dbReference type="PANTHER" id="PTHR30329:SF21">
    <property type="entry name" value="LIPOPROTEIN YIAD-RELATED"/>
    <property type="match status" value="1"/>
</dbReference>
<dbReference type="PANTHER" id="PTHR30329">
    <property type="entry name" value="STATOR ELEMENT OF FLAGELLAR MOTOR COMPLEX"/>
    <property type="match status" value="1"/>
</dbReference>
<dbReference type="Pfam" id="PF13505">
    <property type="entry name" value="OMP_b-brl"/>
    <property type="match status" value="1"/>
</dbReference>
<dbReference type="Pfam" id="PF00691">
    <property type="entry name" value="OmpA"/>
    <property type="match status" value="1"/>
</dbReference>
<dbReference type="PRINTS" id="PR01021">
    <property type="entry name" value="OMPADOMAIN"/>
</dbReference>
<dbReference type="SUPFAM" id="SSF56925">
    <property type="entry name" value="OMPA-like"/>
    <property type="match status" value="1"/>
</dbReference>
<dbReference type="SUPFAM" id="SSF103088">
    <property type="entry name" value="OmpA-like"/>
    <property type="match status" value="1"/>
</dbReference>
<dbReference type="PROSITE" id="PS51123">
    <property type="entry name" value="OMPA_2"/>
    <property type="match status" value="1"/>
</dbReference>
<feature type="signal peptide" evidence="1">
    <location>
        <begin position="1"/>
        <end position="19"/>
    </location>
</feature>
<feature type="chain" id="PRO_0000290208" description="Outer membrane protein Omp38">
    <location>
        <begin position="20"/>
        <end position="356"/>
    </location>
</feature>
<feature type="domain" description="OmpA-like" evidence="2">
    <location>
        <begin position="221"/>
        <end position="339"/>
    </location>
</feature>
<feature type="binding site" evidence="4">
    <location>
        <position position="237"/>
    </location>
    <ligand>
        <name>meso-2,6-diaminopimelate</name>
        <dbReference type="ChEBI" id="CHEBI:57791"/>
    </ligand>
</feature>
<feature type="binding site" evidence="4">
    <location>
        <position position="271"/>
    </location>
    <ligand>
        <name>meso-2,6-diaminopimelate</name>
        <dbReference type="ChEBI" id="CHEBI:57791"/>
    </ligand>
</feature>
<feature type="binding site" evidence="4">
    <location>
        <position position="273"/>
    </location>
    <ligand>
        <name>meso-2,6-diaminopimelate</name>
        <dbReference type="ChEBI" id="CHEBI:57791"/>
    </ligand>
</feature>
<feature type="binding site" evidence="4">
    <location>
        <position position="279"/>
    </location>
    <ligand>
        <name>meso-2,6-diaminopimelate</name>
        <dbReference type="ChEBI" id="CHEBI:57791"/>
    </ligand>
</feature>
<feature type="binding site" evidence="4">
    <location>
        <position position="286"/>
    </location>
    <ligand>
        <name>meso-2,6-diaminopimelate</name>
        <dbReference type="ChEBI" id="CHEBI:57791"/>
    </ligand>
</feature>
<feature type="mutagenesis site" description="Periplasmic domain no longer binds diaminopimelate." evidence="4">
    <original>D</original>
    <variation>A</variation>
    <location>
        <position position="271"/>
    </location>
</feature>
<feature type="mutagenesis site" description="Periplasmic domain no longer binds diaminopimelate." evidence="4">
    <original>R</original>
    <variation>A</variation>
    <location>
        <position position="286"/>
    </location>
</feature>
<feature type="strand" evidence="18">
    <location>
        <begin position="221"/>
        <end position="233"/>
    </location>
</feature>
<feature type="helix" evidence="18">
    <location>
        <begin position="243"/>
        <end position="245"/>
    </location>
</feature>
<feature type="helix" evidence="18">
    <location>
        <begin position="246"/>
        <end position="258"/>
    </location>
</feature>
<feature type="strand" evidence="18">
    <location>
        <begin position="263"/>
        <end position="268"/>
    </location>
</feature>
<feature type="helix" evidence="18">
    <location>
        <begin position="276"/>
        <end position="297"/>
    </location>
</feature>
<feature type="helix" evidence="18">
    <location>
        <begin position="302"/>
        <end position="304"/>
    </location>
</feature>
<feature type="strand" evidence="18">
    <location>
        <begin position="305"/>
        <end position="309"/>
    </location>
</feature>
<feature type="helix" evidence="18">
    <location>
        <begin position="322"/>
        <end position="328"/>
    </location>
</feature>
<feature type="strand" evidence="18">
    <location>
        <begin position="329"/>
        <end position="339"/>
    </location>
</feature>
<comment type="function">
    <text evidence="3 5 10 11">Functions as a porin (PubMed:9928952). Induces apoptosis in human cell lines through caspase-dependent and AIF-dependent pathways. Purified Omp38 enters host cell and localizes to the mitochondria, which presumably leads to a release of proapoptotic molecules such as cytochrome c and AIF (apoptosis-inducing factor) (PubMed:16008580). Binds peptidoglycan, contributes to cell wall maintenance (Probable).</text>
</comment>
<comment type="subunit">
    <text evidence="5">Homotrimer (PubMed:9928952). Forms a pore with a size of 1.3 nm (PubMed:9928952).</text>
</comment>
<comment type="subcellular location">
    <subcellularLocation>
        <location evidence="5">Cell outer membrane</location>
        <topology evidence="9">Multi-pass membrane protein</topology>
    </subcellularLocation>
    <subcellularLocation>
        <location evidence="3">Host mitochondrion</location>
    </subcellularLocation>
</comment>
<comment type="domain">
    <text evidence="4">The periplasmic domain (residues 221-339) binds peptidoglycan (PGN) and diaminopimelate, one of the components of PGN.</text>
</comment>
<comment type="disruption phenotype">
    <text evidence="3">Significant loss of the bacterial outer membrane, not as able to induce apoptosis as wild-type bacteria in human cell lines.</text>
</comment>
<comment type="miscellaneous">
    <text evidence="3">Live A.baumannii and purified Omp38 elicit identical effects with respect to the induction of apoptosis in human cell lines.</text>
</comment>
<comment type="similarity">
    <text evidence="9">Belongs to the outer membrane OOP (TC 1.B.6) superfamily.</text>
</comment>
<gene>
    <name evidence="6" type="primary">omp38</name>
    <name evidence="7" type="synonym">ompA</name>
    <name type="ORF">HMPREF0010_02782</name>
</gene>
<name>OMP38_ACIB2</name>
<protein>
    <recommendedName>
        <fullName evidence="6">Outer membrane protein Omp38</fullName>
    </recommendedName>
    <alternativeName>
        <fullName evidence="7">Outer membrane protein OmpA</fullName>
        <shortName evidence="7">AbOmpA</shortName>
    </alternativeName>
    <alternativeName>
        <fullName evidence="8">Outer membrane protein OmpAb</fullName>
    </alternativeName>
</protein>
<reference key="1">
    <citation type="journal article" date="2005" name="Cell. Microbiol.">
        <title>Outer membrane protein 38 of Acinetobacter baumannii localizes to the mitochondria and induces apoptosis of epithelial cells.</title>
        <authorList>
            <person name="Choi C.H."/>
            <person name="Lee E.Y."/>
            <person name="Lee Y.C."/>
            <person name="Park T.I."/>
            <person name="Kim H.J."/>
            <person name="Hyun S.H."/>
            <person name="Kim S.A."/>
            <person name="Lee S.K."/>
            <person name="Lee J.C."/>
        </authorList>
    </citation>
    <scope>NUCLEOTIDE SEQUENCE [GENOMIC DNA]</scope>
    <scope>FUNCTION IN APOPTOSIS</scope>
    <scope>SUBCELLULAR LOCATION IN HOST CELLS</scope>
    <scope>DISRUPTION PHENOTYPE</scope>
    <source>
        <strain>ATCC 19606 / DSM 30007 / JCM 6841 / CCUG 19606 / CIP 70.34 / NBRC 109757 / NCIMB 12457 / NCTC 12156 / 81</strain>
    </source>
</reference>
<reference key="2">
    <citation type="journal article" date="2012" name="PLoS ONE">
        <title>The success of Acinetobacter species; genetic, metabolic and virulence attributes.</title>
        <authorList>
            <person name="Peleg A.Y."/>
            <person name="de Breij A."/>
            <person name="Adams M.D."/>
            <person name="Cerqueira G.M."/>
            <person name="Mocali S."/>
            <person name="Galardini M."/>
            <person name="Nibbering P.H."/>
            <person name="Earl A.M."/>
            <person name="Ward D.V."/>
            <person name="Paterson D.L."/>
            <person name="Seifert H."/>
            <person name="Dijkshoorn L."/>
        </authorList>
    </citation>
    <scope>NUCLEOTIDE SEQUENCE [LARGE SCALE GENOMIC DNA]</scope>
    <source>
        <strain>ATCC 19606 / DSM 30007 / JCM 6841 / CCUG 19606 / CIP 70.34 / NBRC 109757 / NCIMB 12457 / NCTC 12156 / 81</strain>
    </source>
</reference>
<reference key="3">
    <citation type="journal article" date="1999" name="FEBS Lett.">
        <title>Purification and characterization of a major 40 kDa outer membrane protein of Acinetobacter baumannii.</title>
        <authorList>
            <person name="Jyothisri K."/>
            <person name="Deepak V."/>
            <person name="Rajeswari M.R."/>
        </authorList>
    </citation>
    <scope>FUNCTION AS A PORIN</scope>
    <scope>SUBUNIT</scope>
    <scope>SUBCELLULAR LOCATION</scope>
    <source>
        <strain>ATCC 19606 / DSM 30007 / JCM 6841 / CCUG 19606 / CIP 70.34 / NBRC 109757 / NCIMB 12457 / NCTC 12156 / 81</strain>
    </source>
</reference>
<reference evidence="12 13 14" key="4">
    <citation type="journal article" date="2012" name="FASEB J.">
        <title>Mechanism of anchoring of OmpA protein to the cell wall peptidoglycan of the gram-negative bacterial outer membrane.</title>
        <authorList>
            <person name="Park J.S."/>
            <person name="Lee W.C."/>
            <person name="Yeo K.J."/>
            <person name="Ryu K.S."/>
            <person name="Kumarasiri M."/>
            <person name="Hesek D."/>
            <person name="Lee M."/>
            <person name="Mobashery S."/>
            <person name="Song J.H."/>
            <person name="Kim S.I."/>
            <person name="Lee J.C."/>
            <person name="Cheong C."/>
            <person name="Jeon Y.H."/>
            <person name="Kim H.Y."/>
        </authorList>
    </citation>
    <scope>X-RAY CRYSTALLOGRAPHY (1.59 ANGSTROMS) OF 221-339 IN COMPLEX WITH DIAMINOPIMELATE AND SYNTHETIC PEPTIDOGLYCAN</scope>
    <scope>PEPTIDOGLYCAN-BINDING</scope>
    <scope>DOMAIN</scope>
    <scope>MUTAGENESIS OF ASP-271 AND ARG-286</scope>
</reference>
<reference evidence="15 16 17" key="5">
    <citation type="submission" date="2012-07" db="PDB data bank">
        <title>Enantiomer-dependent amino acid binding affinity of OmpA-like domains from Acinetobacter baumannii peptidoglycan-associated lipoprotein and OmpA.</title>
        <authorList>
            <person name="Lee W.C."/>
            <person name="Park J.S."/>
            <person name="Song J.H."/>
            <person name="Kim S.I."/>
            <person name="Lee J.C."/>
            <person name="Cheong J."/>
            <person name="Kim H.Y."/>
        </authorList>
    </citation>
    <scope>X-RAY CRYSTALLOGRAPHY (1.70 ANGSTROMS) OF 221-339</scope>
</reference>